<organism>
    <name type="scientific">Neurospora crassa (strain ATCC 24698 / 74-OR23-1A / CBS 708.71 / DSM 1257 / FGSC 987)</name>
    <dbReference type="NCBI Taxonomy" id="367110"/>
    <lineage>
        <taxon>Eukaryota</taxon>
        <taxon>Fungi</taxon>
        <taxon>Dikarya</taxon>
        <taxon>Ascomycota</taxon>
        <taxon>Pezizomycotina</taxon>
        <taxon>Sordariomycetes</taxon>
        <taxon>Sordariomycetidae</taxon>
        <taxon>Sordariales</taxon>
        <taxon>Sordariaceae</taxon>
        <taxon>Neurospora</taxon>
    </lineage>
</organism>
<comment type="function">
    <text evidence="1">Involved in nucleolar integrity and required for processing of the pre-rRNA for the 60S ribosome subunit.</text>
</comment>
<comment type="subcellular location">
    <subcellularLocation>
        <location evidence="1">Nucleus</location>
        <location evidence="1">Nucleolus</location>
    </subcellularLocation>
</comment>
<comment type="similarity">
    <text evidence="4">Belongs to the CGR1 family.</text>
</comment>
<reference key="1">
    <citation type="journal article" date="2003" name="Nature">
        <title>The genome sequence of the filamentous fungus Neurospora crassa.</title>
        <authorList>
            <person name="Galagan J.E."/>
            <person name="Calvo S.E."/>
            <person name="Borkovich K.A."/>
            <person name="Selker E.U."/>
            <person name="Read N.D."/>
            <person name="Jaffe D.B."/>
            <person name="FitzHugh W."/>
            <person name="Ma L.-J."/>
            <person name="Smirnov S."/>
            <person name="Purcell S."/>
            <person name="Rehman B."/>
            <person name="Elkins T."/>
            <person name="Engels R."/>
            <person name="Wang S."/>
            <person name="Nielsen C.B."/>
            <person name="Butler J."/>
            <person name="Endrizzi M."/>
            <person name="Qui D."/>
            <person name="Ianakiev P."/>
            <person name="Bell-Pedersen D."/>
            <person name="Nelson M.A."/>
            <person name="Werner-Washburne M."/>
            <person name="Selitrennikoff C.P."/>
            <person name="Kinsey J.A."/>
            <person name="Braun E.L."/>
            <person name="Zelter A."/>
            <person name="Schulte U."/>
            <person name="Kothe G.O."/>
            <person name="Jedd G."/>
            <person name="Mewes H.-W."/>
            <person name="Staben C."/>
            <person name="Marcotte E."/>
            <person name="Greenberg D."/>
            <person name="Roy A."/>
            <person name="Foley K."/>
            <person name="Naylor J."/>
            <person name="Stange-Thomann N."/>
            <person name="Barrett R."/>
            <person name="Gnerre S."/>
            <person name="Kamal M."/>
            <person name="Kamvysselis M."/>
            <person name="Mauceli E.W."/>
            <person name="Bielke C."/>
            <person name="Rudd S."/>
            <person name="Frishman D."/>
            <person name="Krystofova S."/>
            <person name="Rasmussen C."/>
            <person name="Metzenberg R.L."/>
            <person name="Perkins D.D."/>
            <person name="Kroken S."/>
            <person name="Cogoni C."/>
            <person name="Macino G."/>
            <person name="Catcheside D.E.A."/>
            <person name="Li W."/>
            <person name="Pratt R.J."/>
            <person name="Osmani S.A."/>
            <person name="DeSouza C.P.C."/>
            <person name="Glass N.L."/>
            <person name="Orbach M.J."/>
            <person name="Berglund J.A."/>
            <person name="Voelker R."/>
            <person name="Yarden O."/>
            <person name="Plamann M."/>
            <person name="Seiler S."/>
            <person name="Dunlap J.C."/>
            <person name="Radford A."/>
            <person name="Aramayo R."/>
            <person name="Natvig D.O."/>
            <person name="Alex L.A."/>
            <person name="Mannhaupt G."/>
            <person name="Ebbole D.J."/>
            <person name="Freitag M."/>
            <person name="Paulsen I."/>
            <person name="Sachs M.S."/>
            <person name="Lander E.S."/>
            <person name="Nusbaum C."/>
            <person name="Birren B.W."/>
        </authorList>
    </citation>
    <scope>NUCLEOTIDE SEQUENCE [LARGE SCALE GENOMIC DNA]</scope>
    <source>
        <strain>ATCC 24698 / 74-OR23-1A / CBS 708.71 / DSM 1257 / FGSC 987</strain>
    </source>
</reference>
<dbReference type="EMBL" id="CM002236">
    <property type="protein sequence ID" value="EAA34741.1"/>
    <property type="molecule type" value="Genomic_DNA"/>
</dbReference>
<dbReference type="RefSeq" id="XP_963977.1">
    <property type="nucleotide sequence ID" value="XM_958884.2"/>
</dbReference>
<dbReference type="SMR" id="Q7SDA6"/>
<dbReference type="STRING" id="367110.Q7SDA6"/>
<dbReference type="PaxDb" id="5141-EFNCRP00000002063"/>
<dbReference type="EnsemblFungi" id="EAA34741">
    <property type="protein sequence ID" value="EAA34741"/>
    <property type="gene ID" value="NCU02640"/>
</dbReference>
<dbReference type="GeneID" id="3880126"/>
<dbReference type="KEGG" id="ncr:NCU02640"/>
<dbReference type="VEuPathDB" id="FungiDB:NCU02640"/>
<dbReference type="HOGENOM" id="CLU_125051_0_0_1"/>
<dbReference type="InParanoid" id="Q7SDA6"/>
<dbReference type="OrthoDB" id="3942380at2759"/>
<dbReference type="Proteomes" id="UP000001805">
    <property type="component" value="Chromosome 1, Linkage Group I"/>
</dbReference>
<dbReference type="GO" id="GO:0005730">
    <property type="term" value="C:nucleolus"/>
    <property type="evidence" value="ECO:0007669"/>
    <property type="project" value="UniProtKB-SubCell"/>
</dbReference>
<dbReference type="GO" id="GO:0006364">
    <property type="term" value="P:rRNA processing"/>
    <property type="evidence" value="ECO:0007669"/>
    <property type="project" value="UniProtKB-KW"/>
</dbReference>
<dbReference type="InterPro" id="IPR005579">
    <property type="entry name" value="Cgr1-like"/>
</dbReference>
<dbReference type="Pfam" id="PF03879">
    <property type="entry name" value="Cgr1"/>
    <property type="match status" value="1"/>
</dbReference>
<keyword id="KW-0175">Coiled coil</keyword>
<keyword id="KW-0539">Nucleus</keyword>
<keyword id="KW-1185">Reference proteome</keyword>
<keyword id="KW-0690">Ribosome biogenesis</keyword>
<keyword id="KW-0698">rRNA processing</keyword>
<sequence length="123" mass="14453">MSSTTTTTQTTSQVETKAVSKPLGMRVNGKQWHAPKKAFRPGSGLTSYEKRAKERQLLAAVKAKEKELKDEKEAERKRRIEALKEKRAKKEEKERYEKMAEKMHKKRVERLKRKEKRNKLINS</sequence>
<name>CGR1_NEUCR</name>
<accession>Q7SDA6</accession>
<gene>
    <name type="primary">cgr-1</name>
    <name type="ORF">NCU02640</name>
</gene>
<feature type="chain" id="PRO_0000278958" description="rRNA-processing protein cgr-1">
    <location>
        <begin position="1"/>
        <end position="123"/>
    </location>
</feature>
<feature type="region of interest" description="Disordered" evidence="3">
    <location>
        <begin position="1"/>
        <end position="47"/>
    </location>
</feature>
<feature type="region of interest" description="Disordered" evidence="3">
    <location>
        <begin position="85"/>
        <end position="123"/>
    </location>
</feature>
<feature type="coiled-coil region" evidence="2">
    <location>
        <begin position="49"/>
        <end position="110"/>
    </location>
</feature>
<feature type="compositionally biased region" description="Low complexity" evidence="3">
    <location>
        <begin position="1"/>
        <end position="13"/>
    </location>
</feature>
<feature type="compositionally biased region" description="Basic and acidic residues" evidence="3">
    <location>
        <begin position="85"/>
        <end position="102"/>
    </location>
</feature>
<feature type="compositionally biased region" description="Basic residues" evidence="3">
    <location>
        <begin position="103"/>
        <end position="123"/>
    </location>
</feature>
<evidence type="ECO:0000250" key="1"/>
<evidence type="ECO:0000255" key="2"/>
<evidence type="ECO:0000256" key="3">
    <source>
        <dbReference type="SAM" id="MobiDB-lite"/>
    </source>
</evidence>
<evidence type="ECO:0000305" key="4"/>
<protein>
    <recommendedName>
        <fullName>rRNA-processing protein cgr-1</fullName>
    </recommendedName>
</protein>
<proteinExistence type="inferred from homology"/>